<organism>
    <name type="scientific">Xanthomonas axonopodis pv. citri (strain 306)</name>
    <dbReference type="NCBI Taxonomy" id="190486"/>
    <lineage>
        <taxon>Bacteria</taxon>
        <taxon>Pseudomonadati</taxon>
        <taxon>Pseudomonadota</taxon>
        <taxon>Gammaproteobacteria</taxon>
        <taxon>Lysobacterales</taxon>
        <taxon>Lysobacteraceae</taxon>
        <taxon>Xanthomonas</taxon>
    </lineage>
</organism>
<name>RLMH_XANAC</name>
<dbReference type="EC" id="2.1.1.177" evidence="1"/>
<dbReference type="EMBL" id="AE008923">
    <property type="protein sequence ID" value="AAM37620.1"/>
    <property type="molecule type" value="Genomic_DNA"/>
</dbReference>
<dbReference type="RefSeq" id="WP_011051817.1">
    <property type="nucleotide sequence ID" value="NC_003919.1"/>
</dbReference>
<dbReference type="SMR" id="Q8PIX0"/>
<dbReference type="GeneID" id="66911864"/>
<dbReference type="KEGG" id="xac:XAC2775"/>
<dbReference type="eggNOG" id="COG1576">
    <property type="taxonomic scope" value="Bacteria"/>
</dbReference>
<dbReference type="HOGENOM" id="CLU_100552_1_0_6"/>
<dbReference type="Proteomes" id="UP000000576">
    <property type="component" value="Chromosome"/>
</dbReference>
<dbReference type="GO" id="GO:0005737">
    <property type="term" value="C:cytoplasm"/>
    <property type="evidence" value="ECO:0007669"/>
    <property type="project" value="UniProtKB-SubCell"/>
</dbReference>
<dbReference type="GO" id="GO:0070038">
    <property type="term" value="F:rRNA (pseudouridine-N3-)-methyltransferase activity"/>
    <property type="evidence" value="ECO:0007669"/>
    <property type="project" value="UniProtKB-UniRule"/>
</dbReference>
<dbReference type="CDD" id="cd18081">
    <property type="entry name" value="RlmH-like"/>
    <property type="match status" value="1"/>
</dbReference>
<dbReference type="Gene3D" id="3.40.1280.10">
    <property type="match status" value="1"/>
</dbReference>
<dbReference type="HAMAP" id="MF_00658">
    <property type="entry name" value="23SrRNA_methyltr_H"/>
    <property type="match status" value="1"/>
</dbReference>
<dbReference type="InterPro" id="IPR029028">
    <property type="entry name" value="Alpha/beta_knot_MTases"/>
</dbReference>
<dbReference type="InterPro" id="IPR003742">
    <property type="entry name" value="RlmH-like"/>
</dbReference>
<dbReference type="InterPro" id="IPR029026">
    <property type="entry name" value="tRNA_m1G_MTases_N"/>
</dbReference>
<dbReference type="NCBIfam" id="NF000986">
    <property type="entry name" value="PRK00103.1-4"/>
    <property type="match status" value="1"/>
</dbReference>
<dbReference type="NCBIfam" id="TIGR00246">
    <property type="entry name" value="tRNA_RlmH_YbeA"/>
    <property type="match status" value="1"/>
</dbReference>
<dbReference type="PANTHER" id="PTHR33603">
    <property type="entry name" value="METHYLTRANSFERASE"/>
    <property type="match status" value="1"/>
</dbReference>
<dbReference type="PANTHER" id="PTHR33603:SF1">
    <property type="entry name" value="RIBOSOMAL RNA LARGE SUBUNIT METHYLTRANSFERASE H"/>
    <property type="match status" value="1"/>
</dbReference>
<dbReference type="Pfam" id="PF02590">
    <property type="entry name" value="SPOUT_MTase"/>
    <property type="match status" value="1"/>
</dbReference>
<dbReference type="PIRSF" id="PIRSF004505">
    <property type="entry name" value="MT_bac"/>
    <property type="match status" value="1"/>
</dbReference>
<dbReference type="SUPFAM" id="SSF75217">
    <property type="entry name" value="alpha/beta knot"/>
    <property type="match status" value="1"/>
</dbReference>
<keyword id="KW-0963">Cytoplasm</keyword>
<keyword id="KW-0489">Methyltransferase</keyword>
<keyword id="KW-0698">rRNA processing</keyword>
<keyword id="KW-0949">S-adenosyl-L-methionine</keyword>
<keyword id="KW-0808">Transferase</keyword>
<reference key="1">
    <citation type="journal article" date="2002" name="Nature">
        <title>Comparison of the genomes of two Xanthomonas pathogens with differing host specificities.</title>
        <authorList>
            <person name="da Silva A.C.R."/>
            <person name="Ferro J.A."/>
            <person name="Reinach F.C."/>
            <person name="Farah C.S."/>
            <person name="Furlan L.R."/>
            <person name="Quaggio R.B."/>
            <person name="Monteiro-Vitorello C.B."/>
            <person name="Van Sluys M.A."/>
            <person name="Almeida N.F. Jr."/>
            <person name="Alves L.M.C."/>
            <person name="do Amaral A.M."/>
            <person name="Bertolini M.C."/>
            <person name="Camargo L.E.A."/>
            <person name="Camarotte G."/>
            <person name="Cannavan F."/>
            <person name="Cardozo J."/>
            <person name="Chambergo F."/>
            <person name="Ciapina L.P."/>
            <person name="Cicarelli R.M.B."/>
            <person name="Coutinho L.L."/>
            <person name="Cursino-Santos J.R."/>
            <person name="El-Dorry H."/>
            <person name="Faria J.B."/>
            <person name="Ferreira A.J.S."/>
            <person name="Ferreira R.C.C."/>
            <person name="Ferro M.I.T."/>
            <person name="Formighieri E.F."/>
            <person name="Franco M.C."/>
            <person name="Greggio C.C."/>
            <person name="Gruber A."/>
            <person name="Katsuyama A.M."/>
            <person name="Kishi L.T."/>
            <person name="Leite R.P."/>
            <person name="Lemos E.G.M."/>
            <person name="Lemos M.V.F."/>
            <person name="Locali E.C."/>
            <person name="Machado M.A."/>
            <person name="Madeira A.M.B.N."/>
            <person name="Martinez-Rossi N.M."/>
            <person name="Martins E.C."/>
            <person name="Meidanis J."/>
            <person name="Menck C.F.M."/>
            <person name="Miyaki C.Y."/>
            <person name="Moon D.H."/>
            <person name="Moreira L.M."/>
            <person name="Novo M.T.M."/>
            <person name="Okura V.K."/>
            <person name="Oliveira M.C."/>
            <person name="Oliveira V.R."/>
            <person name="Pereira H.A."/>
            <person name="Rossi A."/>
            <person name="Sena J.A.D."/>
            <person name="Silva C."/>
            <person name="de Souza R.F."/>
            <person name="Spinola L.A.F."/>
            <person name="Takita M.A."/>
            <person name="Tamura R.E."/>
            <person name="Teixeira E.C."/>
            <person name="Tezza R.I.D."/>
            <person name="Trindade dos Santos M."/>
            <person name="Truffi D."/>
            <person name="Tsai S.M."/>
            <person name="White F.F."/>
            <person name="Setubal J.C."/>
            <person name="Kitajima J.P."/>
        </authorList>
    </citation>
    <scope>NUCLEOTIDE SEQUENCE [LARGE SCALE GENOMIC DNA]</scope>
    <source>
        <strain>306</strain>
    </source>
</reference>
<evidence type="ECO:0000255" key="1">
    <source>
        <dbReference type="HAMAP-Rule" id="MF_00658"/>
    </source>
</evidence>
<feature type="chain" id="PRO_0000198212" description="Ribosomal RNA large subunit methyltransferase H">
    <location>
        <begin position="1"/>
        <end position="156"/>
    </location>
</feature>
<feature type="binding site" evidence="1">
    <location>
        <position position="73"/>
    </location>
    <ligand>
        <name>S-adenosyl-L-methionine</name>
        <dbReference type="ChEBI" id="CHEBI:59789"/>
    </ligand>
</feature>
<feature type="binding site" evidence="1">
    <location>
        <position position="104"/>
    </location>
    <ligand>
        <name>S-adenosyl-L-methionine</name>
        <dbReference type="ChEBI" id="CHEBI:59789"/>
    </ligand>
</feature>
<feature type="binding site" evidence="1">
    <location>
        <begin position="123"/>
        <end position="128"/>
    </location>
    <ligand>
        <name>S-adenosyl-L-methionine</name>
        <dbReference type="ChEBI" id="CHEBI:59789"/>
    </ligand>
</feature>
<sequence length="156" mass="17357">MKCRLIATGERAPSWVAQGFAEYQKRLSHWMPLELVEIEPGMRGKGRDAQRATDDEGRRVLAALPKNAYVVALDVPGRPLSSEQLAQRMEHWRGQGRDLAFLIGGPEGHAAEVLKSASESWSIGPLTLPHMLVRLIVAEQLYRAAAMLANHPYHRA</sequence>
<accession>Q8PIX0</accession>
<protein>
    <recommendedName>
        <fullName evidence="1">Ribosomal RNA large subunit methyltransferase H</fullName>
        <ecNumber evidence="1">2.1.1.177</ecNumber>
    </recommendedName>
    <alternativeName>
        <fullName evidence="1">23S rRNA (pseudouridine1915-N3)-methyltransferase</fullName>
    </alternativeName>
    <alternativeName>
        <fullName evidence="1">23S rRNA m3Psi1915 methyltransferase</fullName>
    </alternativeName>
    <alternativeName>
        <fullName evidence="1">rRNA (pseudouridine-N3-)-methyltransferase RlmH</fullName>
    </alternativeName>
</protein>
<gene>
    <name evidence="1" type="primary">rlmH</name>
    <name type="ordered locus">XAC2775</name>
</gene>
<comment type="function">
    <text evidence="1">Specifically methylates the pseudouridine at position 1915 (m3Psi1915) in 23S rRNA.</text>
</comment>
<comment type="catalytic activity">
    <reaction evidence="1">
        <text>pseudouridine(1915) in 23S rRNA + S-adenosyl-L-methionine = N(3)-methylpseudouridine(1915) in 23S rRNA + S-adenosyl-L-homocysteine + H(+)</text>
        <dbReference type="Rhea" id="RHEA:42752"/>
        <dbReference type="Rhea" id="RHEA-COMP:10221"/>
        <dbReference type="Rhea" id="RHEA-COMP:10222"/>
        <dbReference type="ChEBI" id="CHEBI:15378"/>
        <dbReference type="ChEBI" id="CHEBI:57856"/>
        <dbReference type="ChEBI" id="CHEBI:59789"/>
        <dbReference type="ChEBI" id="CHEBI:65314"/>
        <dbReference type="ChEBI" id="CHEBI:74486"/>
        <dbReference type="EC" id="2.1.1.177"/>
    </reaction>
</comment>
<comment type="subunit">
    <text evidence="1">Homodimer.</text>
</comment>
<comment type="subcellular location">
    <subcellularLocation>
        <location evidence="1">Cytoplasm</location>
    </subcellularLocation>
</comment>
<comment type="similarity">
    <text evidence="1">Belongs to the RNA methyltransferase RlmH family.</text>
</comment>
<proteinExistence type="inferred from homology"/>